<organism>
    <name type="scientific">Legionella pneumophila subsp. pneumophila (strain Philadelphia 1 / ATCC 33152 / DSM 7513)</name>
    <dbReference type="NCBI Taxonomy" id="272624"/>
    <lineage>
        <taxon>Bacteria</taxon>
        <taxon>Pseudomonadati</taxon>
        <taxon>Pseudomonadota</taxon>
        <taxon>Gammaproteobacteria</taxon>
        <taxon>Legionellales</taxon>
        <taxon>Legionellaceae</taxon>
        <taxon>Legionella</taxon>
    </lineage>
</organism>
<name>NUOB_LEGPH</name>
<keyword id="KW-0004">4Fe-4S</keyword>
<keyword id="KW-0997">Cell inner membrane</keyword>
<keyword id="KW-1003">Cell membrane</keyword>
<keyword id="KW-0408">Iron</keyword>
<keyword id="KW-0411">Iron-sulfur</keyword>
<keyword id="KW-0472">Membrane</keyword>
<keyword id="KW-0479">Metal-binding</keyword>
<keyword id="KW-0520">NAD</keyword>
<keyword id="KW-0874">Quinone</keyword>
<keyword id="KW-1185">Reference proteome</keyword>
<keyword id="KW-1278">Translocase</keyword>
<keyword id="KW-0813">Transport</keyword>
<keyword id="KW-0830">Ubiquinone</keyword>
<accession>Q5ZRT9</accession>
<proteinExistence type="inferred from homology"/>
<comment type="function">
    <text evidence="1">NDH-1 shuttles electrons from NADH, via FMN and iron-sulfur (Fe-S) centers, to quinones in the respiratory chain. Couples the redox reaction to proton translocation (for every two electrons transferred, four hydrogen ions are translocated across the cytoplasmic membrane), and thus conserves the redox energy in a proton gradient (By similarity).</text>
</comment>
<comment type="catalytic activity">
    <reaction evidence="2">
        <text>a quinone + NADH + 5 H(+)(in) = a quinol + NAD(+) + 4 H(+)(out)</text>
        <dbReference type="Rhea" id="RHEA:57888"/>
        <dbReference type="ChEBI" id="CHEBI:15378"/>
        <dbReference type="ChEBI" id="CHEBI:24646"/>
        <dbReference type="ChEBI" id="CHEBI:57540"/>
        <dbReference type="ChEBI" id="CHEBI:57945"/>
        <dbReference type="ChEBI" id="CHEBI:132124"/>
    </reaction>
</comment>
<comment type="cofactor">
    <cofactor evidence="2">
        <name>[4Fe-4S] cluster</name>
        <dbReference type="ChEBI" id="CHEBI:49883"/>
    </cofactor>
    <text evidence="2">Binds 1 [4Fe-4S] cluster.</text>
</comment>
<comment type="subunit">
    <text evidence="2">NDH-1 is composed of 14 different subunits. Subunits NuoB, C, D, E, F, and G constitute the peripheral sector of the complex.</text>
</comment>
<comment type="subcellular location">
    <subcellularLocation>
        <location evidence="2">Cell inner membrane</location>
        <topology evidence="2">Peripheral membrane protein</topology>
        <orientation evidence="2">Cytoplasmic side</orientation>
    </subcellularLocation>
</comment>
<comment type="similarity">
    <text evidence="2">Belongs to the complex I 20 kDa subunit family.</text>
</comment>
<reference key="1">
    <citation type="journal article" date="2004" name="Science">
        <title>The genomic sequence of the accidental pathogen Legionella pneumophila.</title>
        <authorList>
            <person name="Chien M."/>
            <person name="Morozova I."/>
            <person name="Shi S."/>
            <person name="Sheng H."/>
            <person name="Chen J."/>
            <person name="Gomez S.M."/>
            <person name="Asamani G."/>
            <person name="Hill K."/>
            <person name="Nuara J."/>
            <person name="Feder M."/>
            <person name="Rineer J."/>
            <person name="Greenberg J.J."/>
            <person name="Steshenko V."/>
            <person name="Park S.H."/>
            <person name="Zhao B."/>
            <person name="Teplitskaya E."/>
            <person name="Edwards J.R."/>
            <person name="Pampou S."/>
            <person name="Georghiou A."/>
            <person name="Chou I.-C."/>
            <person name="Iannuccilli W."/>
            <person name="Ulz M.E."/>
            <person name="Kim D.H."/>
            <person name="Geringer-Sameth A."/>
            <person name="Goldsberry C."/>
            <person name="Morozov P."/>
            <person name="Fischer S.G."/>
            <person name="Segal G."/>
            <person name="Qu X."/>
            <person name="Rzhetsky A."/>
            <person name="Zhang P."/>
            <person name="Cayanis E."/>
            <person name="De Jong P.J."/>
            <person name="Ju J."/>
            <person name="Kalachikov S."/>
            <person name="Shuman H.A."/>
            <person name="Russo J.J."/>
        </authorList>
    </citation>
    <scope>NUCLEOTIDE SEQUENCE [LARGE SCALE GENOMIC DNA]</scope>
    <source>
        <strain>Philadelphia 1 / ATCC 33152 / DSM 7513</strain>
    </source>
</reference>
<protein>
    <recommendedName>
        <fullName evidence="2">NADH-quinone oxidoreductase subunit B</fullName>
        <ecNumber evidence="2">7.1.1.-</ecNumber>
    </recommendedName>
    <alternativeName>
        <fullName evidence="2">NADH dehydrogenase I subunit B</fullName>
    </alternativeName>
    <alternativeName>
        <fullName evidence="2">NDH-1 subunit B</fullName>
    </alternativeName>
</protein>
<gene>
    <name evidence="2" type="primary">nuoB</name>
    <name type="ordered locus">lpg2788</name>
</gene>
<sequence length="158" mass="17539">MAVAELEKKGFELTTVEKLVGWARSGSMWPMTFGLACCAVEMMHVGAARYDLDRFGIIFRPSPRQSDVMIVAGTLCNKMAPALRKVYDQMPEPRWVISMGSCANGGGYYHYSYSVVRGCDRIVPVDVYVPGCPPTAEALLYGIIQLQNKIRRKPVLEA</sequence>
<feature type="chain" id="PRO_0000358419" description="NADH-quinone oxidoreductase subunit B">
    <location>
        <begin position="1"/>
        <end position="158"/>
    </location>
</feature>
<feature type="binding site" evidence="2">
    <location>
        <position position="37"/>
    </location>
    <ligand>
        <name>[4Fe-4S] cluster</name>
        <dbReference type="ChEBI" id="CHEBI:49883"/>
    </ligand>
</feature>
<feature type="binding site" evidence="2">
    <location>
        <position position="38"/>
    </location>
    <ligand>
        <name>[4Fe-4S] cluster</name>
        <dbReference type="ChEBI" id="CHEBI:49883"/>
    </ligand>
</feature>
<feature type="binding site" evidence="2">
    <location>
        <position position="102"/>
    </location>
    <ligand>
        <name>[4Fe-4S] cluster</name>
        <dbReference type="ChEBI" id="CHEBI:49883"/>
    </ligand>
</feature>
<feature type="binding site" evidence="2">
    <location>
        <position position="132"/>
    </location>
    <ligand>
        <name>[4Fe-4S] cluster</name>
        <dbReference type="ChEBI" id="CHEBI:49883"/>
    </ligand>
</feature>
<evidence type="ECO:0000250" key="1"/>
<evidence type="ECO:0000255" key="2">
    <source>
        <dbReference type="HAMAP-Rule" id="MF_01356"/>
    </source>
</evidence>
<dbReference type="EC" id="7.1.1.-" evidence="2"/>
<dbReference type="EMBL" id="AE017354">
    <property type="protein sequence ID" value="AAU28838.1"/>
    <property type="molecule type" value="Genomic_DNA"/>
</dbReference>
<dbReference type="RefSeq" id="WP_010948477.1">
    <property type="nucleotide sequence ID" value="NC_002942.5"/>
</dbReference>
<dbReference type="RefSeq" id="YP_096785.1">
    <property type="nucleotide sequence ID" value="NC_002942.5"/>
</dbReference>
<dbReference type="SMR" id="Q5ZRT9"/>
<dbReference type="STRING" id="272624.lpg2788"/>
<dbReference type="PaxDb" id="272624-lpg2788"/>
<dbReference type="KEGG" id="lpn:lpg2788"/>
<dbReference type="PATRIC" id="fig|272624.6.peg.2969"/>
<dbReference type="eggNOG" id="COG0377">
    <property type="taxonomic scope" value="Bacteria"/>
</dbReference>
<dbReference type="HOGENOM" id="CLU_055737_7_0_6"/>
<dbReference type="OrthoDB" id="9786737at2"/>
<dbReference type="Proteomes" id="UP000000609">
    <property type="component" value="Chromosome"/>
</dbReference>
<dbReference type="GO" id="GO:0005886">
    <property type="term" value="C:plasma membrane"/>
    <property type="evidence" value="ECO:0007669"/>
    <property type="project" value="UniProtKB-SubCell"/>
</dbReference>
<dbReference type="GO" id="GO:0045271">
    <property type="term" value="C:respiratory chain complex I"/>
    <property type="evidence" value="ECO:0007669"/>
    <property type="project" value="TreeGrafter"/>
</dbReference>
<dbReference type="GO" id="GO:0051539">
    <property type="term" value="F:4 iron, 4 sulfur cluster binding"/>
    <property type="evidence" value="ECO:0007669"/>
    <property type="project" value="UniProtKB-KW"/>
</dbReference>
<dbReference type="GO" id="GO:0005506">
    <property type="term" value="F:iron ion binding"/>
    <property type="evidence" value="ECO:0007669"/>
    <property type="project" value="UniProtKB-UniRule"/>
</dbReference>
<dbReference type="GO" id="GO:0008137">
    <property type="term" value="F:NADH dehydrogenase (ubiquinone) activity"/>
    <property type="evidence" value="ECO:0007669"/>
    <property type="project" value="InterPro"/>
</dbReference>
<dbReference type="GO" id="GO:0050136">
    <property type="term" value="F:NADH:ubiquinone reductase (non-electrogenic) activity"/>
    <property type="evidence" value="ECO:0007669"/>
    <property type="project" value="UniProtKB-UniRule"/>
</dbReference>
<dbReference type="GO" id="GO:0048038">
    <property type="term" value="F:quinone binding"/>
    <property type="evidence" value="ECO:0007669"/>
    <property type="project" value="UniProtKB-KW"/>
</dbReference>
<dbReference type="GO" id="GO:0009060">
    <property type="term" value="P:aerobic respiration"/>
    <property type="evidence" value="ECO:0007669"/>
    <property type="project" value="TreeGrafter"/>
</dbReference>
<dbReference type="GO" id="GO:0015990">
    <property type="term" value="P:electron transport coupled proton transport"/>
    <property type="evidence" value="ECO:0007669"/>
    <property type="project" value="TreeGrafter"/>
</dbReference>
<dbReference type="FunFam" id="3.40.50.12280:FF:000001">
    <property type="entry name" value="NADH-quinone oxidoreductase subunit B 2"/>
    <property type="match status" value="1"/>
</dbReference>
<dbReference type="Gene3D" id="3.40.50.12280">
    <property type="match status" value="1"/>
</dbReference>
<dbReference type="HAMAP" id="MF_01356">
    <property type="entry name" value="NDH1_NuoB"/>
    <property type="match status" value="1"/>
</dbReference>
<dbReference type="InterPro" id="IPR006137">
    <property type="entry name" value="NADH_UbQ_OxRdtase-like_20kDa"/>
</dbReference>
<dbReference type="InterPro" id="IPR006138">
    <property type="entry name" value="NADH_UQ_OxRdtase_20Kd_su"/>
</dbReference>
<dbReference type="NCBIfam" id="TIGR01957">
    <property type="entry name" value="nuoB_fam"/>
    <property type="match status" value="1"/>
</dbReference>
<dbReference type="NCBIfam" id="NF005012">
    <property type="entry name" value="PRK06411.1"/>
    <property type="match status" value="1"/>
</dbReference>
<dbReference type="PANTHER" id="PTHR11995">
    <property type="entry name" value="NADH DEHYDROGENASE"/>
    <property type="match status" value="1"/>
</dbReference>
<dbReference type="PANTHER" id="PTHR11995:SF14">
    <property type="entry name" value="NADH DEHYDROGENASE [UBIQUINONE] IRON-SULFUR PROTEIN 7, MITOCHONDRIAL"/>
    <property type="match status" value="1"/>
</dbReference>
<dbReference type="Pfam" id="PF01058">
    <property type="entry name" value="Oxidored_q6"/>
    <property type="match status" value="1"/>
</dbReference>
<dbReference type="SUPFAM" id="SSF56770">
    <property type="entry name" value="HydA/Nqo6-like"/>
    <property type="match status" value="1"/>
</dbReference>
<dbReference type="PROSITE" id="PS01150">
    <property type="entry name" value="COMPLEX1_20K"/>
    <property type="match status" value="1"/>
</dbReference>